<protein>
    <recommendedName>
        <fullName>Putative uncharacterized protein YBL077W</fullName>
    </recommendedName>
</protein>
<proteinExistence type="uncertain"/>
<name>YBH7_YEAST</name>
<accession>P38183</accession>
<comment type="miscellaneous">
    <text evidence="1">Partially overlaps ILS1.</text>
</comment>
<comment type="caution">
    <text evidence="2">Product of a dubious gene prediction unlikely to encode a functional protein. Because of that it is not part of the S.cerevisiae S288c complete/reference proteome set.</text>
</comment>
<dbReference type="EMBL" id="X79489">
    <property type="protein sequence ID" value="CAA56033.1"/>
    <property type="molecule type" value="Genomic_DNA"/>
</dbReference>
<dbReference type="EMBL" id="Z35838">
    <property type="protein sequence ID" value="CAA84897.1"/>
    <property type="molecule type" value="Genomic_DNA"/>
</dbReference>
<dbReference type="PIR" id="S45433">
    <property type="entry name" value="S45433"/>
</dbReference>
<dbReference type="DIP" id="DIP-3947N"/>
<dbReference type="STRING" id="4932.YBL077W"/>
<dbReference type="iPTMnet" id="P38183"/>
<dbReference type="PaxDb" id="4932-YBL077W"/>
<dbReference type="EnsemblFungi" id="YBL077W_mRNA">
    <property type="protein sequence ID" value="YBL077W"/>
    <property type="gene ID" value="YBL077W"/>
</dbReference>
<dbReference type="AGR" id="SGD:S000000173"/>
<dbReference type="SGD" id="S000000173">
    <property type="gene designation" value="YBL077W"/>
</dbReference>
<dbReference type="HOGENOM" id="CLU_1807718_0_0_1"/>
<organism>
    <name type="scientific">Saccharomyces cerevisiae (strain ATCC 204508 / S288c)</name>
    <name type="common">Baker's yeast</name>
    <dbReference type="NCBI Taxonomy" id="559292"/>
    <lineage>
        <taxon>Eukaryota</taxon>
        <taxon>Fungi</taxon>
        <taxon>Dikarya</taxon>
        <taxon>Ascomycota</taxon>
        <taxon>Saccharomycotina</taxon>
        <taxon>Saccharomycetes</taxon>
        <taxon>Saccharomycetales</taxon>
        <taxon>Saccharomycetaceae</taxon>
        <taxon>Saccharomyces</taxon>
    </lineage>
</organism>
<feature type="chain" id="PRO_0000202448" description="Putative uncharacterized protein YBL077W">
    <location>
        <begin position="1"/>
        <end position="143"/>
    </location>
</feature>
<sequence length="143" mass="16327">MCYDFTGIIQHYRWRQLALHDSNLNVNLHIYIYITSSREKFVRIYMSCFHNLNTFNLKMVSLIDCSSSPIGSVFEPSYLAMSDLQVLLNISKCSLTMASKSIVSLTNSYSTKTSSVASKPHFFLNFWILLTSSLARPSLFSSE</sequence>
<reference key="1">
    <citation type="journal article" date="1995" name="Yeast">
        <title>Sequence analysis of a 78.6 kb segment of the left end of Saccharomyces cerevisiae chromosome II.</title>
        <authorList>
            <person name="Obermaier B."/>
            <person name="Gassenhuber J."/>
            <person name="Piravandi E."/>
            <person name="Domdey H."/>
        </authorList>
    </citation>
    <scope>NUCLEOTIDE SEQUENCE [GENOMIC DNA]</scope>
    <source>
        <strain>ATCC 204508 / S288c</strain>
    </source>
</reference>
<reference key="2">
    <citation type="journal article" date="1994" name="EMBO J.">
        <title>Complete DNA sequence of yeast chromosome II.</title>
        <authorList>
            <person name="Feldmann H."/>
            <person name="Aigle M."/>
            <person name="Aljinovic G."/>
            <person name="Andre B."/>
            <person name="Baclet M.C."/>
            <person name="Barthe C."/>
            <person name="Baur A."/>
            <person name="Becam A.-M."/>
            <person name="Biteau N."/>
            <person name="Boles E."/>
            <person name="Brandt T."/>
            <person name="Brendel M."/>
            <person name="Brueckner M."/>
            <person name="Bussereau F."/>
            <person name="Christiansen C."/>
            <person name="Contreras R."/>
            <person name="Crouzet M."/>
            <person name="Cziepluch C."/>
            <person name="Demolis N."/>
            <person name="Delaveau T."/>
            <person name="Doignon F."/>
            <person name="Domdey H."/>
            <person name="Duesterhus S."/>
            <person name="Dubois E."/>
            <person name="Dujon B."/>
            <person name="El Bakkoury M."/>
            <person name="Entian K.-D."/>
            <person name="Feuermann M."/>
            <person name="Fiers W."/>
            <person name="Fobo G.M."/>
            <person name="Fritz C."/>
            <person name="Gassenhuber J."/>
            <person name="Glansdorff N."/>
            <person name="Goffeau A."/>
            <person name="Grivell L.A."/>
            <person name="de Haan M."/>
            <person name="Hein C."/>
            <person name="Herbert C.J."/>
            <person name="Hollenberg C.P."/>
            <person name="Holmstroem K."/>
            <person name="Jacq C."/>
            <person name="Jacquet M."/>
            <person name="Jauniaux J.-C."/>
            <person name="Jonniaux J.-L."/>
            <person name="Kallesoee T."/>
            <person name="Kiesau P."/>
            <person name="Kirchrath L."/>
            <person name="Koetter P."/>
            <person name="Korol S."/>
            <person name="Liebl S."/>
            <person name="Logghe M."/>
            <person name="Lohan A.J.E."/>
            <person name="Louis E.J."/>
            <person name="Li Z.Y."/>
            <person name="Maat M.J."/>
            <person name="Mallet L."/>
            <person name="Mannhaupt G."/>
            <person name="Messenguy F."/>
            <person name="Miosga T."/>
            <person name="Molemans F."/>
            <person name="Mueller S."/>
            <person name="Nasr F."/>
            <person name="Obermaier B."/>
            <person name="Perea J."/>
            <person name="Pierard A."/>
            <person name="Piravandi E."/>
            <person name="Pohl F.M."/>
            <person name="Pohl T.M."/>
            <person name="Potier S."/>
            <person name="Proft M."/>
            <person name="Purnelle B."/>
            <person name="Ramezani Rad M."/>
            <person name="Rieger M."/>
            <person name="Rose M."/>
            <person name="Schaaff-Gerstenschlaeger I."/>
            <person name="Scherens B."/>
            <person name="Schwarzlose C."/>
            <person name="Skala J."/>
            <person name="Slonimski P.P."/>
            <person name="Smits P.H.M."/>
            <person name="Souciet J.-L."/>
            <person name="Steensma H.Y."/>
            <person name="Stucka R."/>
            <person name="Urrestarazu L.A."/>
            <person name="van der Aart Q.J.M."/>
            <person name="Van Dyck L."/>
            <person name="Vassarotti A."/>
            <person name="Vetter I."/>
            <person name="Vierendeels F."/>
            <person name="Vissers S."/>
            <person name="Wagner G."/>
            <person name="de Wergifosse P."/>
            <person name="Wolfe K.H."/>
            <person name="Zagulski M."/>
            <person name="Zimmermann F.K."/>
            <person name="Mewes H.-W."/>
            <person name="Kleine K."/>
        </authorList>
    </citation>
    <scope>NUCLEOTIDE SEQUENCE [LARGE SCALE GENOMIC DNA]</scope>
    <source>
        <strain>ATCC 204508 / S288c</strain>
    </source>
</reference>
<reference key="3">
    <citation type="journal article" date="2014" name="G3 (Bethesda)">
        <title>The reference genome sequence of Saccharomyces cerevisiae: Then and now.</title>
        <authorList>
            <person name="Engel S.R."/>
            <person name="Dietrich F.S."/>
            <person name="Fisk D.G."/>
            <person name="Binkley G."/>
            <person name="Balakrishnan R."/>
            <person name="Costanzo M.C."/>
            <person name="Dwight S.S."/>
            <person name="Hitz B.C."/>
            <person name="Karra K."/>
            <person name="Nash R.S."/>
            <person name="Weng S."/>
            <person name="Wong E.D."/>
            <person name="Lloyd P."/>
            <person name="Skrzypek M.S."/>
            <person name="Miyasato S.R."/>
            <person name="Simison M."/>
            <person name="Cherry J.M."/>
        </authorList>
    </citation>
    <scope>GENOME REANNOTATION</scope>
    <source>
        <strain>ATCC 204508 / S288c</strain>
    </source>
</reference>
<gene>
    <name type="ordered locus">YBL077W</name>
    <name type="ORF">YBL0733</name>
</gene>
<evidence type="ECO:0000305" key="1"/>
<evidence type="ECO:0000305" key="2">
    <source>
    </source>
</evidence>